<sequence>MASINKLALLSRTLSSAAAQATVKPPVQVFGLEGRYATALYSAASKLSQLDQVEKDLTALQATIRSDKKLREYVTSPIINKKVMATALKEASEKLRFAPATVNLLGLLADNGRLKKLDTVINAYKTIMAAHRGEVVCEVVTAKPLDASQSKQLEGALKSFLKGNESLKITSRVDPSIIGGLIVSIGDKYVDMSIATKVKLYTDVIQTAA</sequence>
<feature type="transit peptide" description="Mitochondrion" evidence="1">
    <location>
        <begin position="1"/>
        <end status="unknown"/>
    </location>
</feature>
<feature type="chain" id="PRO_0000002650" description="ATP synthase subunit O, mitochondrial">
    <location>
        <begin status="unknown"/>
        <end position="209"/>
    </location>
</feature>
<feature type="sequence conflict" description="In Ref. 1; CAA67980." evidence="2" ref="1">
    <original>D</original>
    <variation>N</variation>
    <location>
        <position position="191"/>
    </location>
</feature>
<proteinExistence type="evidence at transcript level"/>
<comment type="function">
    <text>Mitochondrial membrane ATP synthase (F(1)F(0) ATP synthase or Complex V) produces ATP from ADP in the presence of a proton gradient across the membrane which is generated by electron transport complexes of the respiratory chain. F-type ATPases consist of two structural domains, F(1) - containing the extramembraneous catalytic core and F(0) - containing the membrane proton channel, linked together by a central stalk and a peripheral stalk. During catalysis, ATP synthesis in the catalytic domain of F(1) is coupled via a rotary mechanism of the central stalk subunits to proton translocation. Part of the complex F(0) domain and the peripheric stalk, which acts as a stator to hold the catalytic alpha(3)beta(3) subcomplex and subunit a/ATP6 static relative to the rotary elements.</text>
</comment>
<comment type="subunit">
    <text>F-type ATPases have 2 components, CF(1) - the catalytic core - and CF(0) - the membrane proton channel. CF(1) has five subunits: alpha(3), beta(3), gamma(1), delta(1), epsilon(1). CF(0) has three main subunits: a, b and c.</text>
</comment>
<comment type="subcellular location">
    <subcellularLocation>
        <location>Mitochondrion</location>
    </subcellularLocation>
    <subcellularLocation>
        <location>Mitochondrion inner membrane</location>
    </subcellularLocation>
</comment>
<comment type="similarity">
    <text evidence="2">Belongs to the ATPase delta chain family.</text>
</comment>
<reference key="1">
    <citation type="journal article" date="1999" name="Mol. Gen. Genet.">
        <title>Identification of nuclear genes encoding mitochondrial proteins: isolation of a collection of D. melanogaster cDNAs homologous to sequences in the Human Gene Index database.</title>
        <authorList>
            <person name="Caggese C."/>
            <person name="Ragone G."/>
            <person name="Perrini B."/>
            <person name="Moschetti R."/>
            <person name="de Pinto V."/>
            <person name="Caizzi R."/>
            <person name="Barsanti P."/>
        </authorList>
    </citation>
    <scope>NUCLEOTIDE SEQUENCE [MRNA]</scope>
    <source>
        <tissue>Ovary</tissue>
    </source>
</reference>
<reference key="2">
    <citation type="journal article" date="2000" name="Science">
        <title>The genome sequence of Drosophila melanogaster.</title>
        <authorList>
            <person name="Adams M.D."/>
            <person name="Celniker S.E."/>
            <person name="Holt R.A."/>
            <person name="Evans C.A."/>
            <person name="Gocayne J.D."/>
            <person name="Amanatides P.G."/>
            <person name="Scherer S.E."/>
            <person name="Li P.W."/>
            <person name="Hoskins R.A."/>
            <person name="Galle R.F."/>
            <person name="George R.A."/>
            <person name="Lewis S.E."/>
            <person name="Richards S."/>
            <person name="Ashburner M."/>
            <person name="Henderson S.N."/>
            <person name="Sutton G.G."/>
            <person name="Wortman J.R."/>
            <person name="Yandell M.D."/>
            <person name="Zhang Q."/>
            <person name="Chen L.X."/>
            <person name="Brandon R.C."/>
            <person name="Rogers Y.-H.C."/>
            <person name="Blazej R.G."/>
            <person name="Champe M."/>
            <person name="Pfeiffer B.D."/>
            <person name="Wan K.H."/>
            <person name="Doyle C."/>
            <person name="Baxter E.G."/>
            <person name="Helt G."/>
            <person name="Nelson C.R."/>
            <person name="Miklos G.L.G."/>
            <person name="Abril J.F."/>
            <person name="Agbayani A."/>
            <person name="An H.-J."/>
            <person name="Andrews-Pfannkoch C."/>
            <person name="Baldwin D."/>
            <person name="Ballew R.M."/>
            <person name="Basu A."/>
            <person name="Baxendale J."/>
            <person name="Bayraktaroglu L."/>
            <person name="Beasley E.M."/>
            <person name="Beeson K.Y."/>
            <person name="Benos P.V."/>
            <person name="Berman B.P."/>
            <person name="Bhandari D."/>
            <person name="Bolshakov S."/>
            <person name="Borkova D."/>
            <person name="Botchan M.R."/>
            <person name="Bouck J."/>
            <person name="Brokstein P."/>
            <person name="Brottier P."/>
            <person name="Burtis K.C."/>
            <person name="Busam D.A."/>
            <person name="Butler H."/>
            <person name="Cadieu E."/>
            <person name="Center A."/>
            <person name="Chandra I."/>
            <person name="Cherry J.M."/>
            <person name="Cawley S."/>
            <person name="Dahlke C."/>
            <person name="Davenport L.B."/>
            <person name="Davies P."/>
            <person name="de Pablos B."/>
            <person name="Delcher A."/>
            <person name="Deng Z."/>
            <person name="Mays A.D."/>
            <person name="Dew I."/>
            <person name="Dietz S.M."/>
            <person name="Dodson K."/>
            <person name="Doup L.E."/>
            <person name="Downes M."/>
            <person name="Dugan-Rocha S."/>
            <person name="Dunkov B.C."/>
            <person name="Dunn P."/>
            <person name="Durbin K.J."/>
            <person name="Evangelista C.C."/>
            <person name="Ferraz C."/>
            <person name="Ferriera S."/>
            <person name="Fleischmann W."/>
            <person name="Fosler C."/>
            <person name="Gabrielian A.E."/>
            <person name="Garg N.S."/>
            <person name="Gelbart W.M."/>
            <person name="Glasser K."/>
            <person name="Glodek A."/>
            <person name="Gong F."/>
            <person name="Gorrell J.H."/>
            <person name="Gu Z."/>
            <person name="Guan P."/>
            <person name="Harris M."/>
            <person name="Harris N.L."/>
            <person name="Harvey D.A."/>
            <person name="Heiman T.J."/>
            <person name="Hernandez J.R."/>
            <person name="Houck J."/>
            <person name="Hostin D."/>
            <person name="Houston K.A."/>
            <person name="Howland T.J."/>
            <person name="Wei M.-H."/>
            <person name="Ibegwam C."/>
            <person name="Jalali M."/>
            <person name="Kalush F."/>
            <person name="Karpen G.H."/>
            <person name="Ke Z."/>
            <person name="Kennison J.A."/>
            <person name="Ketchum K.A."/>
            <person name="Kimmel B.E."/>
            <person name="Kodira C.D."/>
            <person name="Kraft C.L."/>
            <person name="Kravitz S."/>
            <person name="Kulp D."/>
            <person name="Lai Z."/>
            <person name="Lasko P."/>
            <person name="Lei Y."/>
            <person name="Levitsky A.A."/>
            <person name="Li J.H."/>
            <person name="Li Z."/>
            <person name="Liang Y."/>
            <person name="Lin X."/>
            <person name="Liu X."/>
            <person name="Mattei B."/>
            <person name="McIntosh T.C."/>
            <person name="McLeod M.P."/>
            <person name="McPherson D."/>
            <person name="Merkulov G."/>
            <person name="Milshina N.V."/>
            <person name="Mobarry C."/>
            <person name="Morris J."/>
            <person name="Moshrefi A."/>
            <person name="Mount S.M."/>
            <person name="Moy M."/>
            <person name="Murphy B."/>
            <person name="Murphy L."/>
            <person name="Muzny D.M."/>
            <person name="Nelson D.L."/>
            <person name="Nelson D.R."/>
            <person name="Nelson K.A."/>
            <person name="Nixon K."/>
            <person name="Nusskern D.R."/>
            <person name="Pacleb J.M."/>
            <person name="Palazzolo M."/>
            <person name="Pittman G.S."/>
            <person name="Pan S."/>
            <person name="Pollard J."/>
            <person name="Puri V."/>
            <person name="Reese M.G."/>
            <person name="Reinert K."/>
            <person name="Remington K."/>
            <person name="Saunders R.D.C."/>
            <person name="Scheeler F."/>
            <person name="Shen H."/>
            <person name="Shue B.C."/>
            <person name="Siden-Kiamos I."/>
            <person name="Simpson M."/>
            <person name="Skupski M.P."/>
            <person name="Smith T.J."/>
            <person name="Spier E."/>
            <person name="Spradling A.C."/>
            <person name="Stapleton M."/>
            <person name="Strong R."/>
            <person name="Sun E."/>
            <person name="Svirskas R."/>
            <person name="Tector C."/>
            <person name="Turner R."/>
            <person name="Venter E."/>
            <person name="Wang A.H."/>
            <person name="Wang X."/>
            <person name="Wang Z.-Y."/>
            <person name="Wassarman D.A."/>
            <person name="Weinstock G.M."/>
            <person name="Weissenbach J."/>
            <person name="Williams S.M."/>
            <person name="Woodage T."/>
            <person name="Worley K.C."/>
            <person name="Wu D."/>
            <person name="Yang S."/>
            <person name="Yao Q.A."/>
            <person name="Ye J."/>
            <person name="Yeh R.-F."/>
            <person name="Zaveri J.S."/>
            <person name="Zhan M."/>
            <person name="Zhang G."/>
            <person name="Zhao Q."/>
            <person name="Zheng L."/>
            <person name="Zheng X.H."/>
            <person name="Zhong F.N."/>
            <person name="Zhong W."/>
            <person name="Zhou X."/>
            <person name="Zhu S.C."/>
            <person name="Zhu X."/>
            <person name="Smith H.O."/>
            <person name="Gibbs R.A."/>
            <person name="Myers E.W."/>
            <person name="Rubin G.M."/>
            <person name="Venter J.C."/>
        </authorList>
    </citation>
    <scope>NUCLEOTIDE SEQUENCE [LARGE SCALE GENOMIC DNA]</scope>
    <source>
        <strain>Berkeley</strain>
    </source>
</reference>
<reference key="3">
    <citation type="journal article" date="2002" name="Genome Biol.">
        <title>Annotation of the Drosophila melanogaster euchromatic genome: a systematic review.</title>
        <authorList>
            <person name="Misra S."/>
            <person name="Crosby M.A."/>
            <person name="Mungall C.J."/>
            <person name="Matthews B.B."/>
            <person name="Campbell K.S."/>
            <person name="Hradecky P."/>
            <person name="Huang Y."/>
            <person name="Kaminker J.S."/>
            <person name="Millburn G.H."/>
            <person name="Prochnik S.E."/>
            <person name="Smith C.D."/>
            <person name="Tupy J.L."/>
            <person name="Whitfield E.J."/>
            <person name="Bayraktaroglu L."/>
            <person name="Berman B.P."/>
            <person name="Bettencourt B.R."/>
            <person name="Celniker S.E."/>
            <person name="de Grey A.D.N.J."/>
            <person name="Drysdale R.A."/>
            <person name="Harris N.L."/>
            <person name="Richter J."/>
            <person name="Russo S."/>
            <person name="Schroeder A.J."/>
            <person name="Shu S.Q."/>
            <person name="Stapleton M."/>
            <person name="Yamada C."/>
            <person name="Ashburner M."/>
            <person name="Gelbart W.M."/>
            <person name="Rubin G.M."/>
            <person name="Lewis S.E."/>
        </authorList>
    </citation>
    <scope>GENOME REANNOTATION</scope>
    <source>
        <strain>Berkeley</strain>
    </source>
</reference>
<reference key="4">
    <citation type="journal article" date="2002" name="Genome Biol.">
        <title>A Drosophila full-length cDNA resource.</title>
        <authorList>
            <person name="Stapleton M."/>
            <person name="Carlson J.W."/>
            <person name="Brokstein P."/>
            <person name="Yu C."/>
            <person name="Champe M."/>
            <person name="George R.A."/>
            <person name="Guarin H."/>
            <person name="Kronmiller B."/>
            <person name="Pacleb J.M."/>
            <person name="Park S."/>
            <person name="Wan K.H."/>
            <person name="Rubin G.M."/>
            <person name="Celniker S.E."/>
        </authorList>
    </citation>
    <scope>NUCLEOTIDE SEQUENCE [LARGE SCALE MRNA]</scope>
    <source>
        <strain>Berkeley</strain>
        <tissue>Head</tissue>
    </source>
</reference>
<name>ATPO_DROME</name>
<keyword id="KW-0066">ATP synthesis</keyword>
<keyword id="KW-0375">Hydrogen ion transport</keyword>
<keyword id="KW-0406">Ion transport</keyword>
<keyword id="KW-0472">Membrane</keyword>
<keyword id="KW-0496">Mitochondrion</keyword>
<keyword id="KW-0999">Mitochondrion inner membrane</keyword>
<keyword id="KW-1185">Reference proteome</keyword>
<keyword id="KW-0809">Transit peptide</keyword>
<keyword id="KW-0813">Transport</keyword>
<evidence type="ECO:0000255" key="1"/>
<evidence type="ECO:0000305" key="2"/>
<evidence type="ECO:0000312" key="3">
    <source>
        <dbReference type="FlyBase" id="FBgn0016691"/>
    </source>
</evidence>
<organism>
    <name type="scientific">Drosophila melanogaster</name>
    <name type="common">Fruit fly</name>
    <dbReference type="NCBI Taxonomy" id="7227"/>
    <lineage>
        <taxon>Eukaryota</taxon>
        <taxon>Metazoa</taxon>
        <taxon>Ecdysozoa</taxon>
        <taxon>Arthropoda</taxon>
        <taxon>Hexapoda</taxon>
        <taxon>Insecta</taxon>
        <taxon>Pterygota</taxon>
        <taxon>Neoptera</taxon>
        <taxon>Endopterygota</taxon>
        <taxon>Diptera</taxon>
        <taxon>Brachycera</taxon>
        <taxon>Muscomorpha</taxon>
        <taxon>Ephydroidea</taxon>
        <taxon>Drosophilidae</taxon>
        <taxon>Drosophila</taxon>
        <taxon>Sophophora</taxon>
    </lineage>
</organism>
<dbReference type="EMBL" id="X99666">
    <property type="protein sequence ID" value="CAA67980.1"/>
    <property type="molecule type" value="mRNA"/>
</dbReference>
<dbReference type="EMBL" id="AE014297">
    <property type="protein sequence ID" value="AAF55156.1"/>
    <property type="molecule type" value="Genomic_DNA"/>
</dbReference>
<dbReference type="EMBL" id="AY058261">
    <property type="protein sequence ID" value="AAL13490.1"/>
    <property type="molecule type" value="mRNA"/>
</dbReference>
<dbReference type="RefSeq" id="NP_524358.2">
    <property type="nucleotide sequence ID" value="NM_079634.3"/>
</dbReference>
<dbReference type="SMR" id="Q24439"/>
<dbReference type="BioGRID" id="66909">
    <property type="interactions" value="35"/>
</dbReference>
<dbReference type="ComplexPortal" id="CPX-8618">
    <property type="entry name" value="Mitochondrial proton-transporting ATP synthase complex"/>
</dbReference>
<dbReference type="ComplexPortal" id="CPX-8619">
    <property type="entry name" value="Mitochondrial proton-transporting ATP synthase complex, testis-specific variant"/>
</dbReference>
<dbReference type="DIP" id="DIP-23606N"/>
<dbReference type="FunCoup" id="Q24439">
    <property type="interactions" value="1590"/>
</dbReference>
<dbReference type="IntAct" id="Q24439">
    <property type="interactions" value="101"/>
</dbReference>
<dbReference type="MINT" id="Q24439"/>
<dbReference type="STRING" id="7227.FBpp0082522"/>
<dbReference type="PaxDb" id="7227-FBpp0082522"/>
<dbReference type="DNASU" id="41845"/>
<dbReference type="EnsemblMetazoa" id="FBtr0083063">
    <property type="protein sequence ID" value="FBpp0082522"/>
    <property type="gene ID" value="FBgn0016691"/>
</dbReference>
<dbReference type="GeneID" id="41845"/>
<dbReference type="KEGG" id="dme:Dmel_CG4307"/>
<dbReference type="AGR" id="FB:FBgn0016691"/>
<dbReference type="CTD" id="41845"/>
<dbReference type="FlyBase" id="FBgn0016691">
    <property type="gene designation" value="ATPsynO"/>
</dbReference>
<dbReference type="VEuPathDB" id="VectorBase:FBgn0016691"/>
<dbReference type="eggNOG" id="KOG1662">
    <property type="taxonomic scope" value="Eukaryota"/>
</dbReference>
<dbReference type="HOGENOM" id="CLU_085114_0_0_1"/>
<dbReference type="InParanoid" id="Q24439"/>
<dbReference type="OMA" id="MVDNIQD"/>
<dbReference type="OrthoDB" id="1262810at2759"/>
<dbReference type="PhylomeDB" id="Q24439"/>
<dbReference type="Reactome" id="R-DME-163210">
    <property type="pathway name" value="Formation of ATP by chemiosmotic coupling"/>
</dbReference>
<dbReference type="Reactome" id="R-DME-8949613">
    <property type="pathway name" value="Cristae formation"/>
</dbReference>
<dbReference type="Reactome" id="R-DME-9837999">
    <property type="pathway name" value="Mitochondrial protein degradation"/>
</dbReference>
<dbReference type="BioGRID-ORCS" id="41845">
    <property type="hits" value="0 hits in 1 CRISPR screen"/>
</dbReference>
<dbReference type="GenomeRNAi" id="41845"/>
<dbReference type="PRO" id="PR:Q24439"/>
<dbReference type="Proteomes" id="UP000000803">
    <property type="component" value="Chromosome 3R"/>
</dbReference>
<dbReference type="Bgee" id="FBgn0016691">
    <property type="expression patterns" value="Expressed in dorsal cluster neuron (Drosophila) in brain and 284 other cell types or tissues"/>
</dbReference>
<dbReference type="ExpressionAtlas" id="Q24439">
    <property type="expression patterns" value="baseline and differential"/>
</dbReference>
<dbReference type="GO" id="GO:0005743">
    <property type="term" value="C:mitochondrial inner membrane"/>
    <property type="evidence" value="ECO:0000250"/>
    <property type="project" value="FlyBase"/>
</dbReference>
<dbReference type="GO" id="GO:0005739">
    <property type="term" value="C:mitochondrion"/>
    <property type="evidence" value="ECO:0007005"/>
    <property type="project" value="FlyBase"/>
</dbReference>
<dbReference type="GO" id="GO:0045259">
    <property type="term" value="C:proton-transporting ATP synthase complex"/>
    <property type="evidence" value="ECO:0000250"/>
    <property type="project" value="FlyBase"/>
</dbReference>
<dbReference type="GO" id="GO:0046933">
    <property type="term" value="F:proton-transporting ATP synthase activity, rotational mechanism"/>
    <property type="evidence" value="ECO:0007669"/>
    <property type="project" value="InterPro"/>
</dbReference>
<dbReference type="GO" id="GO:0042776">
    <property type="term" value="P:proton motive force-driven mitochondrial ATP synthesis"/>
    <property type="evidence" value="ECO:0000250"/>
    <property type="project" value="FlyBase"/>
</dbReference>
<dbReference type="GO" id="GO:1902600">
    <property type="term" value="P:proton transmembrane transport"/>
    <property type="evidence" value="ECO:0000250"/>
    <property type="project" value="FlyBase"/>
</dbReference>
<dbReference type="FunFam" id="1.10.520.20:FF:000002">
    <property type="entry name" value="ATP synthase subunit O, mitochondrial"/>
    <property type="match status" value="1"/>
</dbReference>
<dbReference type="Gene3D" id="1.10.520.20">
    <property type="entry name" value="N-terminal domain of the delta subunit of the F1F0-ATP synthase"/>
    <property type="match status" value="1"/>
</dbReference>
<dbReference type="HAMAP" id="MF_01416">
    <property type="entry name" value="ATP_synth_delta_bact"/>
    <property type="match status" value="1"/>
</dbReference>
<dbReference type="InterPro" id="IPR026015">
    <property type="entry name" value="ATP_synth_OSCP/delta_N_sf"/>
</dbReference>
<dbReference type="InterPro" id="IPR000711">
    <property type="entry name" value="ATPase_OSCP/dsu"/>
</dbReference>
<dbReference type="NCBIfam" id="TIGR01145">
    <property type="entry name" value="ATP_synt_delta"/>
    <property type="match status" value="1"/>
</dbReference>
<dbReference type="PANTHER" id="PTHR11910">
    <property type="entry name" value="ATP SYNTHASE DELTA CHAIN"/>
    <property type="match status" value="1"/>
</dbReference>
<dbReference type="Pfam" id="PF00213">
    <property type="entry name" value="OSCP"/>
    <property type="match status" value="1"/>
</dbReference>
<dbReference type="PRINTS" id="PR00125">
    <property type="entry name" value="ATPASEDELTA"/>
</dbReference>
<dbReference type="SUPFAM" id="SSF47928">
    <property type="entry name" value="N-terminal domain of the delta subunit of the F1F0-ATP synthase"/>
    <property type="match status" value="1"/>
</dbReference>
<accession>Q24439</accession>
<accession>Q9VFA4</accession>
<gene>
    <name evidence="3" type="primary">ATPsynO</name>
    <name evidence="3" type="synonym">Oscp</name>
    <name evidence="3" type="ORF">CG4307</name>
</gene>
<protein>
    <recommendedName>
        <fullName>ATP synthase subunit O, mitochondrial</fullName>
    </recommendedName>
    <alternativeName>
        <fullName>Oligomycin sensitivity conferral protein</fullName>
        <shortName>OSCP</shortName>
    </alternativeName>
</protein>